<name>TRHDE_MOUSE</name>
<protein>
    <recommendedName>
        <fullName>Thyrotropin-releasing hormone-degrading ectoenzyme</fullName>
        <shortName>TRH-DE</shortName>
        <shortName>TRH-degrading ectoenzyme</shortName>
        <ecNumber>3.4.19.6</ecNumber>
    </recommendedName>
    <alternativeName>
        <fullName>Pyroglutamyl-peptidase II</fullName>
        <shortName>PAP-II</shortName>
    </alternativeName>
    <alternativeName>
        <fullName>TRH-specific aminopeptidase</fullName>
    </alternativeName>
    <alternativeName>
        <fullName>Thyroliberinase</fullName>
    </alternativeName>
</protein>
<reference key="1">
    <citation type="submission" date="2005-07" db="EMBL/GenBank/DDBJ databases">
        <authorList>
            <person name="Mural R.J."/>
            <person name="Adams M.D."/>
            <person name="Myers E.W."/>
            <person name="Smith H.O."/>
            <person name="Venter J.C."/>
        </authorList>
    </citation>
    <scope>NUCLEOTIDE SEQUENCE [LARGE SCALE GENOMIC DNA]</scope>
</reference>
<reference key="2">
    <citation type="journal article" date="2004" name="Genome Res.">
        <title>The status, quality, and expansion of the NIH full-length cDNA project: the Mammalian Gene Collection (MGC).</title>
        <authorList>
            <consortium name="The MGC Project Team"/>
        </authorList>
    </citation>
    <scope>NUCLEOTIDE SEQUENCE [LARGE SCALE MRNA] OF 21-1066</scope>
    <source>
        <tissue>Eye</tissue>
    </source>
</reference>
<reference key="3">
    <citation type="journal article" date="2010" name="Cell">
        <title>A tissue-specific atlas of mouse protein phosphorylation and expression.</title>
        <authorList>
            <person name="Huttlin E.L."/>
            <person name="Jedrychowski M.P."/>
            <person name="Elias J.E."/>
            <person name="Goswami T."/>
            <person name="Rad R."/>
            <person name="Beausoleil S.A."/>
            <person name="Villen J."/>
            <person name="Haas W."/>
            <person name="Sowa M.E."/>
            <person name="Gygi S.P."/>
        </authorList>
    </citation>
    <scope>IDENTIFICATION BY MASS SPECTROMETRY [LARGE SCALE ANALYSIS]</scope>
    <source>
        <tissue>Brain</tissue>
    </source>
</reference>
<gene>
    <name type="primary">Trhde</name>
</gene>
<accession>Q8K093</accession>
<accession>A0A6I8MX30</accession>
<feature type="chain" id="PRO_0000095119" description="Thyrotropin-releasing hormone-degrading ectoenzyme">
    <location>
        <begin position="1"/>
        <end position="1066"/>
    </location>
</feature>
<feature type="topological domain" description="Cytoplasmic" evidence="2">
    <location>
        <begin position="1"/>
        <end position="81"/>
    </location>
</feature>
<feature type="transmembrane region" description="Helical; Signal-anchor for type II membrane protein" evidence="2">
    <location>
        <begin position="82"/>
        <end position="102"/>
    </location>
</feature>
<feature type="topological domain" description="Extracellular" evidence="2">
    <location>
        <begin position="103"/>
        <end position="1066"/>
    </location>
</feature>
<feature type="region of interest" description="Disordered" evidence="4">
    <location>
        <begin position="1"/>
        <end position="43"/>
    </location>
</feature>
<feature type="region of interest" description="Disordered" evidence="4">
    <location>
        <begin position="118"/>
        <end position="176"/>
    </location>
</feature>
<feature type="compositionally biased region" description="Basic and acidic residues" evidence="4">
    <location>
        <begin position="1"/>
        <end position="14"/>
    </location>
</feature>
<feature type="compositionally biased region" description="Basic residues" evidence="4">
    <location>
        <begin position="15"/>
        <end position="25"/>
    </location>
</feature>
<feature type="active site" description="Proton acceptor" evidence="3">
    <location>
        <position position="483"/>
    </location>
</feature>
<feature type="binding site" evidence="1">
    <location>
        <begin position="446"/>
        <end position="450"/>
    </location>
    <ligand>
        <name>substrate</name>
    </ligand>
</feature>
<feature type="binding site" evidence="3">
    <location>
        <position position="482"/>
    </location>
    <ligand>
        <name>Zn(2+)</name>
        <dbReference type="ChEBI" id="CHEBI:29105"/>
        <note>catalytic</note>
    </ligand>
</feature>
<feature type="binding site" evidence="3">
    <location>
        <position position="486"/>
    </location>
    <ligand>
        <name>Zn(2+)</name>
        <dbReference type="ChEBI" id="CHEBI:29105"/>
        <note>catalytic</note>
    </ligand>
</feature>
<feature type="binding site" evidence="3">
    <location>
        <position position="505"/>
    </location>
    <ligand>
        <name>Zn(2+)</name>
        <dbReference type="ChEBI" id="CHEBI:29105"/>
        <note>catalytic</note>
    </ligand>
</feature>
<feature type="site" description="Transition state stabilizer" evidence="1">
    <location>
        <position position="569"/>
    </location>
</feature>
<feature type="modified residue" description="Phosphothreonine; by PKC" evidence="2">
    <location>
        <position position="71"/>
    </location>
</feature>
<feature type="glycosylation site" description="N-linked (GlcNAc...) asparagine" evidence="2">
    <location>
        <position position="131"/>
    </location>
</feature>
<feature type="glycosylation site" description="N-linked (GlcNAc...) asparagine" evidence="2">
    <location>
        <position position="202"/>
    </location>
</feature>
<feature type="glycosylation site" description="N-linked (GlcNAc...) asparagine" evidence="2">
    <location>
        <position position="217"/>
    </location>
</feature>
<feature type="glycosylation site" description="N-linked (GlcNAc...) asparagine" evidence="2">
    <location>
        <position position="264"/>
    </location>
</feature>
<feature type="glycosylation site" description="N-linked (GlcNAc...) asparagine" evidence="2">
    <location>
        <position position="380"/>
    </location>
</feature>
<feature type="glycosylation site" description="N-linked (GlcNAc...) asparagine" evidence="2">
    <location>
        <position position="647"/>
    </location>
</feature>
<feature type="glycosylation site" description="N-linked (GlcNAc...) asparagine" evidence="2">
    <location>
        <position position="676"/>
    </location>
</feature>
<feature type="glycosylation site" description="N-linked (GlcNAc...) asparagine" evidence="2">
    <location>
        <position position="691"/>
    </location>
</feature>
<feature type="glycosylation site" description="N-linked (GlcNAc...) asparagine" evidence="2">
    <location>
        <position position="705"/>
    </location>
</feature>
<feature type="glycosylation site" description="N-linked (GlcNAc...) asparagine" evidence="2">
    <location>
        <position position="726"/>
    </location>
</feature>
<feature type="glycosylation site" description="N-linked (GlcNAc...) asparagine" evidence="2">
    <location>
        <position position="842"/>
    </location>
</feature>
<feature type="glycosylation site" description="N-linked (GlcNAc...) asparagine" evidence="2">
    <location>
        <position position="948"/>
    </location>
</feature>
<feature type="disulfide bond" description="Interchain" evidence="1">
    <location>
        <position position="109"/>
    </location>
</feature>
<proteinExistence type="evidence at protein level"/>
<keyword id="KW-0031">Aminopeptidase</keyword>
<keyword id="KW-1015">Disulfide bond</keyword>
<keyword id="KW-0325">Glycoprotein</keyword>
<keyword id="KW-0378">Hydrolase</keyword>
<keyword id="KW-0472">Membrane</keyword>
<keyword id="KW-0479">Metal-binding</keyword>
<keyword id="KW-0482">Metalloprotease</keyword>
<keyword id="KW-0597">Phosphoprotein</keyword>
<keyword id="KW-0645">Protease</keyword>
<keyword id="KW-1185">Reference proteome</keyword>
<keyword id="KW-0735">Signal-anchor</keyword>
<keyword id="KW-0812">Transmembrane</keyword>
<keyword id="KW-1133">Transmembrane helix</keyword>
<keyword id="KW-0862">Zinc</keyword>
<evidence type="ECO:0000250" key="1"/>
<evidence type="ECO:0000255" key="2"/>
<evidence type="ECO:0000255" key="3">
    <source>
        <dbReference type="PROSITE-ProRule" id="PRU10095"/>
    </source>
</evidence>
<evidence type="ECO:0000256" key="4">
    <source>
        <dbReference type="SAM" id="MobiDB-lite"/>
    </source>
</evidence>
<evidence type="ECO:0000305" key="5"/>
<comment type="function">
    <text evidence="1">Specific inactivation of TRH after its release.</text>
</comment>
<comment type="catalytic activity">
    <reaction>
        <text>Release of the N-terminal pyroglutamyl group from pGlu-|-His-Xaa tripeptides and pGlu-|-His-Xaa-Gly tetrapeptides.</text>
        <dbReference type="EC" id="3.4.19.6"/>
    </reaction>
</comment>
<comment type="cofactor">
    <cofactor evidence="1">
        <name>Zn(2+)</name>
        <dbReference type="ChEBI" id="CHEBI:29105"/>
    </cofactor>
    <text evidence="1">Binds 1 zinc ion per subunit.</text>
</comment>
<comment type="subunit">
    <text evidence="1">Homodimer; disulfide-linked.</text>
</comment>
<comment type="subcellular location">
    <subcellularLocation>
        <location evidence="1">Membrane</location>
        <topology evidence="1">Single-pass type II membrane protein</topology>
    </subcellularLocation>
</comment>
<comment type="similarity">
    <text evidence="5">Belongs to the peptidase M1 family.</text>
</comment>
<comment type="sequence caution" evidence="5">
    <conflict type="erroneous initiation">
        <sequence resource="EMBL-CDS" id="AAH32288"/>
    </conflict>
    <text>Truncated N-terminus.</text>
</comment>
<sequence>MALDGERGEQEEEKKKKKKKKKRKKKEEEGAEKSSSPFAATMGEDDAALRASGRGLSDPWADSVGVRPRTTERHIAVHKRLVLAFAVSIVALLAVTMLAVLLSLRFDECGASAAMPGTDGGLGGFPERDSNSSFPGSARRNHHAGGESSQRESGEVGTPGTPSAQPPSEEEREQWQPWTQLRLSGHLKPLHYNLMLTAFMENFTFSGEVNVEIACRNATRYVVLHASRVAVEKVQVAEDRAFGAVPVAGFFLYPQTQVLVVVLNRTLDAQRHYNLKIIYNALIENELLGFFRSSYVIHGERRFLGVTQFSPTHARKAFPCFDEPIYKATFKISIKHQATYLSLSNMPVETSVFEEDGWVTDHFSQTPLMSTYYLAWAICNFTYRETTTKSGVVVRLYARPDAIRRGSGDYALHITKRLIEFYEDYFKVPYSLPKLDLLAVPKHPYAAMENWGLSIFVEQRILLDPSVSSISYLLDVTMVIVHEICHQWFGDLVTPVWWEDVWLKEGFAHYFEFVGTDYLYPAWNMEKQRFLTDVLHEVMLLDGLASSHPVSQEVLRATDIDRVFDWIAYKKGAALIRMLANFMGHSVFQRGLQDYLTIHKYGNAARNDLWNTLSEALRRNGKYVNIQEVMDQWTLQMGYPVITILGNTTAENRILITQQHFIYDIGAKTKALQLQNSSYLWQIPLTIVVGNRSHVSSEAIIWVSNKSEHHRIAYLDRGSWILGNINQTGYFRVNYDLRNWRLLIDQLIRNHEVLSVSNRAALIDDAFSLARAGYLPQNIPLEIIRYLSEEKDFLPWHAASRALYPLDKLLDRMENYNIFNEYILKQVATTYIKLGWPRNNFNGSLVQASYQHEELRREVIMLACSFGNKHCHQQASTLISDWISSNRNRIPLNVRDIVYCTGVSLLDEDVWEFIWMKFHSTTAVSEKKILLEALTCSDDRNLLSRLLNLSLNSEVVLDQDAIDVIIHVARNPHGRDLAWKFFRDKWKILNTRYGEALFMNSKLISGVTEFLNTEGELKELKNFMKSYDGVASASFSRAVETVEANVRWKRFYQDELFQWLGKAMRH</sequence>
<organism>
    <name type="scientific">Mus musculus</name>
    <name type="common">Mouse</name>
    <dbReference type="NCBI Taxonomy" id="10090"/>
    <lineage>
        <taxon>Eukaryota</taxon>
        <taxon>Metazoa</taxon>
        <taxon>Chordata</taxon>
        <taxon>Craniata</taxon>
        <taxon>Vertebrata</taxon>
        <taxon>Euteleostomi</taxon>
        <taxon>Mammalia</taxon>
        <taxon>Eutheria</taxon>
        <taxon>Euarchontoglires</taxon>
        <taxon>Glires</taxon>
        <taxon>Rodentia</taxon>
        <taxon>Myomorpha</taxon>
        <taxon>Muroidea</taxon>
        <taxon>Muridae</taxon>
        <taxon>Murinae</taxon>
        <taxon>Mus</taxon>
        <taxon>Mus</taxon>
    </lineage>
</organism>
<dbReference type="EC" id="3.4.19.6"/>
<dbReference type="EMBL" id="CH466539">
    <property type="protein sequence ID" value="EDL21761.1"/>
    <property type="molecule type" value="Genomic_DNA"/>
</dbReference>
<dbReference type="EMBL" id="BC032288">
    <property type="protein sequence ID" value="AAH32288.1"/>
    <property type="status" value="ALT_INIT"/>
    <property type="molecule type" value="mRNA"/>
</dbReference>
<dbReference type="CCDS" id="CCDS24175.1"/>
<dbReference type="RefSeq" id="NP_666353.2">
    <property type="nucleotide sequence ID" value="NM_146241.3"/>
</dbReference>
<dbReference type="SMR" id="Q8K093"/>
<dbReference type="FunCoup" id="Q8K093">
    <property type="interactions" value="346"/>
</dbReference>
<dbReference type="STRING" id="10090.ENSMUSP00000057449"/>
<dbReference type="ChEMBL" id="CHEMBL3600275"/>
<dbReference type="MEROPS" id="M01.008"/>
<dbReference type="GlyCosmos" id="Q8K093">
    <property type="glycosylation" value="12 sites, No reported glycans"/>
</dbReference>
<dbReference type="GlyGen" id="Q8K093">
    <property type="glycosylation" value="14 sites, 1 O-linked glycan (1 site)"/>
</dbReference>
<dbReference type="PhosphoSitePlus" id="Q8K093"/>
<dbReference type="PaxDb" id="10090-ENSMUSP00000057449"/>
<dbReference type="ProteomicsDB" id="259311"/>
<dbReference type="Antibodypedia" id="52788">
    <property type="antibodies" value="82 antibodies from 14 providers"/>
</dbReference>
<dbReference type="DNASU" id="237553"/>
<dbReference type="Ensembl" id="ENSMUST00000239411.2">
    <property type="protein sequence ID" value="ENSMUSP00000159381.2"/>
    <property type="gene ID" value="ENSMUSG00000050663.9"/>
</dbReference>
<dbReference type="GeneID" id="237553"/>
<dbReference type="KEGG" id="mmu:237553"/>
<dbReference type="UCSC" id="uc007hat.2">
    <property type="organism name" value="mouse"/>
</dbReference>
<dbReference type="AGR" id="MGI:2384311"/>
<dbReference type="CTD" id="29953"/>
<dbReference type="MGI" id="MGI:2384311">
    <property type="gene designation" value="Trhde"/>
</dbReference>
<dbReference type="VEuPathDB" id="HostDB:ENSMUSG00000050663"/>
<dbReference type="eggNOG" id="KOG1046">
    <property type="taxonomic scope" value="Eukaryota"/>
</dbReference>
<dbReference type="GeneTree" id="ENSGT00940000155878"/>
<dbReference type="HOGENOM" id="CLU_003705_2_2_1"/>
<dbReference type="InParanoid" id="Q8K093"/>
<dbReference type="OrthoDB" id="6750768at2759"/>
<dbReference type="PhylomeDB" id="Q8K093"/>
<dbReference type="TreeFam" id="TF300395"/>
<dbReference type="BioGRID-ORCS" id="237553">
    <property type="hits" value="4 hits in 78 CRISPR screens"/>
</dbReference>
<dbReference type="ChiTaRS" id="Trhde">
    <property type="organism name" value="mouse"/>
</dbReference>
<dbReference type="PRO" id="PR:Q8K093"/>
<dbReference type="Proteomes" id="UP000000589">
    <property type="component" value="Chromosome 10"/>
</dbReference>
<dbReference type="RNAct" id="Q8K093">
    <property type="molecule type" value="protein"/>
</dbReference>
<dbReference type="Bgee" id="ENSMUSG00000050663">
    <property type="expression patterns" value="Expressed in pigmented layer of retina and 54 other cell types or tissues"/>
</dbReference>
<dbReference type="ExpressionAtlas" id="Q8K093">
    <property type="expression patterns" value="baseline and differential"/>
</dbReference>
<dbReference type="GO" id="GO:0016020">
    <property type="term" value="C:membrane"/>
    <property type="evidence" value="ECO:0007669"/>
    <property type="project" value="UniProtKB-SubCell"/>
</dbReference>
<dbReference type="GO" id="GO:0004177">
    <property type="term" value="F:aminopeptidase activity"/>
    <property type="evidence" value="ECO:0007669"/>
    <property type="project" value="UniProtKB-KW"/>
</dbReference>
<dbReference type="GO" id="GO:0008237">
    <property type="term" value="F:metallopeptidase activity"/>
    <property type="evidence" value="ECO:0007669"/>
    <property type="project" value="UniProtKB-KW"/>
</dbReference>
<dbReference type="GO" id="GO:0016920">
    <property type="term" value="F:pyroglutamyl-peptidase activity"/>
    <property type="evidence" value="ECO:0007669"/>
    <property type="project" value="UniProtKB-EC"/>
</dbReference>
<dbReference type="GO" id="GO:0008270">
    <property type="term" value="F:zinc ion binding"/>
    <property type="evidence" value="ECO:0007669"/>
    <property type="project" value="InterPro"/>
</dbReference>
<dbReference type="GO" id="GO:0006508">
    <property type="term" value="P:proteolysis"/>
    <property type="evidence" value="ECO:0007669"/>
    <property type="project" value="UniProtKB-KW"/>
</dbReference>
<dbReference type="CDD" id="cd09601">
    <property type="entry name" value="M1_APN-Q_like"/>
    <property type="match status" value="1"/>
</dbReference>
<dbReference type="FunFam" id="2.60.40.1910:FF:000006">
    <property type="entry name" value="Aminopeptidase"/>
    <property type="match status" value="1"/>
</dbReference>
<dbReference type="FunFam" id="1.25.50.20:FF:000005">
    <property type="entry name" value="Aminopeptidase N-like protein"/>
    <property type="match status" value="1"/>
</dbReference>
<dbReference type="FunFam" id="1.10.390.10:FF:000039">
    <property type="entry name" value="thyrotropin-releasing hormone-degrading ectoenzyme"/>
    <property type="match status" value="1"/>
</dbReference>
<dbReference type="FunFam" id="2.60.40.1730:FF:000007">
    <property type="entry name" value="thyrotropin-releasing hormone-degrading ectoenzyme"/>
    <property type="match status" value="1"/>
</dbReference>
<dbReference type="Gene3D" id="1.25.50.20">
    <property type="match status" value="1"/>
</dbReference>
<dbReference type="Gene3D" id="2.60.40.1910">
    <property type="match status" value="1"/>
</dbReference>
<dbReference type="Gene3D" id="1.10.390.10">
    <property type="entry name" value="Neutral Protease Domain 2"/>
    <property type="match status" value="1"/>
</dbReference>
<dbReference type="Gene3D" id="2.60.40.1730">
    <property type="entry name" value="tricorn interacting facor f3 domain"/>
    <property type="match status" value="1"/>
</dbReference>
<dbReference type="InterPro" id="IPR045357">
    <property type="entry name" value="Aminopeptidase_N-like_N"/>
</dbReference>
<dbReference type="InterPro" id="IPR042097">
    <property type="entry name" value="Aminopeptidase_N-like_N_sf"/>
</dbReference>
<dbReference type="InterPro" id="IPR024571">
    <property type="entry name" value="ERAP1-like_C_dom"/>
</dbReference>
<dbReference type="InterPro" id="IPR034016">
    <property type="entry name" value="M1_APN-typ"/>
</dbReference>
<dbReference type="InterPro" id="IPR001930">
    <property type="entry name" value="Peptidase_M1"/>
</dbReference>
<dbReference type="InterPro" id="IPR050344">
    <property type="entry name" value="Peptidase_M1_aminopeptidases"/>
</dbReference>
<dbReference type="InterPro" id="IPR014782">
    <property type="entry name" value="Peptidase_M1_dom"/>
</dbReference>
<dbReference type="InterPro" id="IPR027268">
    <property type="entry name" value="Peptidase_M4/M1_CTD_sf"/>
</dbReference>
<dbReference type="PANTHER" id="PTHR11533">
    <property type="entry name" value="PROTEASE M1 ZINC METALLOPROTEASE"/>
    <property type="match status" value="1"/>
</dbReference>
<dbReference type="PANTHER" id="PTHR11533:SF294">
    <property type="entry name" value="THYROTROPIN-RELEASING HORMONE-DEGRADING ECTOENZYME"/>
    <property type="match status" value="1"/>
</dbReference>
<dbReference type="Pfam" id="PF11838">
    <property type="entry name" value="ERAP1_C"/>
    <property type="match status" value="1"/>
</dbReference>
<dbReference type="Pfam" id="PF01433">
    <property type="entry name" value="Peptidase_M1"/>
    <property type="match status" value="1"/>
</dbReference>
<dbReference type="Pfam" id="PF17900">
    <property type="entry name" value="Peptidase_M1_N"/>
    <property type="match status" value="1"/>
</dbReference>
<dbReference type="PRINTS" id="PR00756">
    <property type="entry name" value="ALADIPTASE"/>
</dbReference>
<dbReference type="SUPFAM" id="SSF63737">
    <property type="entry name" value="Leukotriene A4 hydrolase N-terminal domain"/>
    <property type="match status" value="1"/>
</dbReference>
<dbReference type="SUPFAM" id="SSF55486">
    <property type="entry name" value="Metalloproteases ('zincins'), catalytic domain"/>
    <property type="match status" value="1"/>
</dbReference>
<dbReference type="PROSITE" id="PS00142">
    <property type="entry name" value="ZINC_PROTEASE"/>
    <property type="match status" value="1"/>
</dbReference>